<evidence type="ECO:0000250" key="1">
    <source>
        <dbReference type="UniProtKB" id="Q4WAW7"/>
    </source>
</evidence>
<evidence type="ECO:0000250" key="2">
    <source>
        <dbReference type="UniProtKB" id="Q50EL0"/>
    </source>
</evidence>
<evidence type="ECO:0000256" key="3">
    <source>
        <dbReference type="SAM" id="MobiDB-lite"/>
    </source>
</evidence>
<evidence type="ECO:0000269" key="4">
    <source>
    </source>
</evidence>
<evidence type="ECO:0000269" key="5">
    <source>
    </source>
</evidence>
<evidence type="ECO:0000269" key="6">
    <source>
    </source>
</evidence>
<evidence type="ECO:0000269" key="7">
    <source>
    </source>
</evidence>
<evidence type="ECO:0000269" key="8">
    <source>
    </source>
</evidence>
<evidence type="ECO:0000269" key="9">
    <source>
    </source>
</evidence>
<evidence type="ECO:0000303" key="10">
    <source>
    </source>
</evidence>
<evidence type="ECO:0000305" key="11"/>
<evidence type="ECO:0007829" key="12">
    <source>
        <dbReference type="PDB" id="4LD7"/>
    </source>
</evidence>
<organism>
    <name type="scientific">Neosartorya fischeri (strain ATCC 1020 / DSM 3700 / CBS 544.65 / FGSC A1164 / JCM 1740 / NRRL 181 / WB 181)</name>
    <name type="common">Aspergillus fischerianus</name>
    <dbReference type="NCBI Taxonomy" id="331117"/>
    <lineage>
        <taxon>Eukaryota</taxon>
        <taxon>Fungi</taxon>
        <taxon>Dikarya</taxon>
        <taxon>Ascomycota</taxon>
        <taxon>Pezizomycotina</taxon>
        <taxon>Eurotiomycetes</taxon>
        <taxon>Eurotiomycetidae</taxon>
        <taxon>Eurotiales</taxon>
        <taxon>Aspergillaceae</taxon>
        <taxon>Aspergillus</taxon>
        <taxon>Aspergillus subgen. Fumigati</taxon>
    </lineage>
</organism>
<name>ANAPT_NEOFI</name>
<keyword id="KW-0002">3D-structure</keyword>
<keyword id="KW-0017">Alkaloid metabolism</keyword>
<keyword id="KW-1185">Reference proteome</keyword>
<keyword id="KW-0808">Transferase</keyword>
<accession>A1DN10</accession>
<protein>
    <recommendedName>
        <fullName evidence="10">Indole diterpene prenyltransferase anaPT</fullName>
        <ecNumber evidence="4 5 7 8 9">2.5.1.-</ecNumber>
    </recommendedName>
    <alternativeName>
        <fullName evidence="10">Acetylaszonalenin synthesis protein anaPT</fullName>
    </alternativeName>
</protein>
<reference key="1">
    <citation type="journal article" date="2008" name="PLoS Genet.">
        <title>Genomic islands in the pathogenic filamentous fungus Aspergillus fumigatus.</title>
        <authorList>
            <person name="Fedorova N.D."/>
            <person name="Khaldi N."/>
            <person name="Joardar V.S."/>
            <person name="Maiti R."/>
            <person name="Amedeo P."/>
            <person name="Anderson M.J."/>
            <person name="Crabtree J."/>
            <person name="Silva J.C."/>
            <person name="Badger J.H."/>
            <person name="Albarraq A."/>
            <person name="Angiuoli S."/>
            <person name="Bussey H."/>
            <person name="Bowyer P."/>
            <person name="Cotty P.J."/>
            <person name="Dyer P.S."/>
            <person name="Egan A."/>
            <person name="Galens K."/>
            <person name="Fraser-Liggett C.M."/>
            <person name="Haas B.J."/>
            <person name="Inman J.M."/>
            <person name="Kent R."/>
            <person name="Lemieux S."/>
            <person name="Malavazi I."/>
            <person name="Orvis J."/>
            <person name="Roemer T."/>
            <person name="Ronning C.M."/>
            <person name="Sundaram J.P."/>
            <person name="Sutton G."/>
            <person name="Turner G."/>
            <person name="Venter J.C."/>
            <person name="White O.R."/>
            <person name="Whitty B.R."/>
            <person name="Youngman P."/>
            <person name="Wolfe K.H."/>
            <person name="Goldman G.H."/>
            <person name="Wortman J.R."/>
            <person name="Jiang B."/>
            <person name="Denning D.W."/>
            <person name="Nierman W.C."/>
        </authorList>
    </citation>
    <scope>NUCLEOTIDE SEQUENCE [LARGE SCALE GENOMIC DNA]</scope>
    <source>
        <strain>ATCC 1020 / DSM 3700 / CBS 544.65 / FGSC A1164 / JCM 1740 / NRRL 181 / WB 181</strain>
    </source>
</reference>
<reference key="2">
    <citation type="journal article" date="2009" name="J. Biol. Chem.">
        <title>Acetylaszonalenin biosynthesis in Neosartorya fischeri. Identification of the biosynthetic gene cluster by genomic mining and functional proof of the genes by biochemical investigation.</title>
        <authorList>
            <person name="Yin W.B."/>
            <person name="Grundmann A."/>
            <person name="Cheng J."/>
            <person name="Li S.M."/>
        </authorList>
    </citation>
    <scope>FUNCTION</scope>
    <scope>CATALYTIC ACTIVITY</scope>
    <scope>BIOPHYSICOCHEMICAL PROPERTIES</scope>
    <scope>PATHWAY</scope>
</reference>
<reference key="3">
    <citation type="journal article" date="2009" name="Org. Biomol. Chem.">
        <title>Stereospecific synthesis of aszonalenins by using two recombinant prenyltransferases.</title>
        <authorList>
            <person name="Yin W.B."/>
            <person name="Cheng J."/>
            <person name="Li S.M."/>
        </authorList>
    </citation>
    <scope>FUNCTION</scope>
    <scope>CATALYTIC ACTIVITY</scope>
</reference>
<reference key="4">
    <citation type="journal article" date="2010" name="Org. Biomol. Chem.">
        <title>Reconstruction of pyrrolo[2,3-b]indoles carrying an alpha-configured reverse C3-dimethylallyl moiety by using recombinant enzymes.</title>
        <authorList>
            <person name="Yin W.B."/>
            <person name="Xie X.L."/>
            <person name="Matuschek M."/>
            <person name="Li S.M."/>
        </authorList>
    </citation>
    <scope>FUNCTION</scope>
    <scope>CATALYTIC ACTIVITY</scope>
</reference>
<reference key="5">
    <citation type="journal article" date="2013" name="ChemBioChem">
        <title>Geranylation of cyclic dipeptides by the dimethylallyl transferase AnaPT resulting in a shift of prenylation position on the indole ring.</title>
        <authorList>
            <person name="Pockrandt D."/>
            <person name="Li S.M."/>
        </authorList>
    </citation>
    <scope>FUNCTION</scope>
    <scope>CATALYTIC ACTIVITY</scope>
    <scope>BIOPHYSICOCHEMICAL PROPERTIES</scope>
</reference>
<reference key="6">
    <citation type="journal article" date="2015" name="J. Nat. Prod.">
        <title>Complementary flavonoid prenylations by fungal indole prenyltransferases.</title>
        <authorList>
            <person name="Zhou K."/>
            <person name="Yu X."/>
            <person name="Xie X."/>
            <person name="Li S.M."/>
        </authorList>
    </citation>
    <scope>FUNCTION</scope>
    <scope>CATALYTIC ACTIVITY</scope>
    <scope>BIOPHYSICOCHEMICAL PROPERTIES</scope>
</reference>
<reference key="7">
    <citation type="journal article" date="2013" name="Chem. Biol.">
        <title>Catalytic mechanism of stereospecific formation of cis-configured prenylated pyrroloindoline diketopiperazines by indole prenyltransferases.</title>
        <authorList>
            <person name="Yu X."/>
            <person name="Zocher G."/>
            <person name="Xie X."/>
            <person name="Liebhold M."/>
            <person name="Schutz S."/>
            <person name="Stehle T."/>
            <person name="Li S.M."/>
        </authorList>
    </citation>
    <scope>X-RAY CRYSTALLOGRAPHY (2.83 ANGSTROMS)</scope>
    <scope>CATALYTIC ACTIVITY</scope>
</reference>
<sequence length="437" mass="48811">MSPLSMQTDSVQGTAENKSLETNGTSNDQQLPWKVLGKSLGLPTIEQEQYWLNTAPYFNNLLIQCGYDVHQQYQYLAFYHRHVLPVLGPFIRSSAEANYISGFSAEGYPMELSVNYQASKATVRLGCEPVGEFAGTSQDPMNQFMTREVLGRLSRLDPTFDLRLFDYFDSQFSLTTSEANLAASKLIKQRRQSKVIAFDLKDGAIIPKAYFFLKGKSLASGIPVQDVAFNAIESIAPKQIESPLRVLRTFVTKLFSKPTVTSDVFILAVDCIVPEKSRIKLYVADSQLSLATLREFWTLGGSVTDSATMKGLEIAEELWRILQYDDAVCSHSNMDQLPLVVNYELSSGSATPKPQLYLPLHGRNDEAMANALTKFWDYLGWKGLAAQYKKDLYANNPCRNLAETTTVQRWVAFSYTESGGAYLTVYFHAVGGMKGNL</sequence>
<gene>
    <name evidence="10" type="primary">anaPT</name>
    <name type="ORF">NFIA_055300</name>
</gene>
<proteinExistence type="evidence at protein level"/>
<dbReference type="EC" id="2.5.1.-" evidence="4 5 7 8 9"/>
<dbReference type="EMBL" id="DS027698">
    <property type="protein sequence ID" value="EAW16181.1"/>
    <property type="molecule type" value="Genomic_DNA"/>
</dbReference>
<dbReference type="RefSeq" id="XP_001258078.1">
    <property type="nucleotide sequence ID" value="XM_001258077.1"/>
</dbReference>
<dbReference type="PDB" id="4LD7">
    <property type="method" value="X-ray"/>
    <property type="resolution" value="2.83 A"/>
    <property type="chains" value="A/B/C/D/E/F/G/H/I/J/K/L/M/N/O/P=1-437"/>
</dbReference>
<dbReference type="PDBsum" id="4LD7"/>
<dbReference type="SMR" id="A1DN10"/>
<dbReference type="EnsemblFungi" id="EAW16181">
    <property type="protein sequence ID" value="EAW16181"/>
    <property type="gene ID" value="NFIA_055300"/>
</dbReference>
<dbReference type="GeneID" id="4584593"/>
<dbReference type="KEGG" id="nfi:NFIA_055300"/>
<dbReference type="VEuPathDB" id="FungiDB:NFIA_055300"/>
<dbReference type="eggNOG" id="ENOG502S2XP">
    <property type="taxonomic scope" value="Eukaryota"/>
</dbReference>
<dbReference type="HOGENOM" id="CLU_037431_0_0_1"/>
<dbReference type="OMA" id="LYANNPC"/>
<dbReference type="OrthoDB" id="3354387at2759"/>
<dbReference type="BioCyc" id="MetaCyc:MONOMER-18807"/>
<dbReference type="EvolutionaryTrace" id="A1DN10"/>
<dbReference type="Proteomes" id="UP000006702">
    <property type="component" value="Unassembled WGS sequence"/>
</dbReference>
<dbReference type="GO" id="GO:0016765">
    <property type="term" value="F:transferase activity, transferring alkyl or aryl (other than methyl) groups"/>
    <property type="evidence" value="ECO:0007669"/>
    <property type="project" value="InterPro"/>
</dbReference>
<dbReference type="GO" id="GO:0009820">
    <property type="term" value="P:alkaloid metabolic process"/>
    <property type="evidence" value="ECO:0007669"/>
    <property type="project" value="UniProtKB-KW"/>
</dbReference>
<dbReference type="CDD" id="cd13929">
    <property type="entry name" value="PT-DMATS_CymD"/>
    <property type="match status" value="1"/>
</dbReference>
<dbReference type="InterPro" id="IPR033964">
    <property type="entry name" value="Aro_prenylTrfase"/>
</dbReference>
<dbReference type="InterPro" id="IPR017795">
    <property type="entry name" value="Aro_prenylTrfase_DMATS"/>
</dbReference>
<dbReference type="InterPro" id="IPR012148">
    <property type="entry name" value="DMATS-type_fun"/>
</dbReference>
<dbReference type="NCBIfam" id="TIGR03429">
    <property type="entry name" value="arom_pren_DMATS"/>
    <property type="match status" value="1"/>
</dbReference>
<dbReference type="PANTHER" id="PTHR40627">
    <property type="entry name" value="INDOLE PRENYLTRANSFERASE TDIB-RELATED"/>
    <property type="match status" value="1"/>
</dbReference>
<dbReference type="PANTHER" id="PTHR40627:SF3">
    <property type="entry name" value="PRENYLTRANSFERASE ASQH2-RELATED"/>
    <property type="match status" value="1"/>
</dbReference>
<dbReference type="Pfam" id="PF11991">
    <property type="entry name" value="Trp_DMAT"/>
    <property type="match status" value="1"/>
</dbReference>
<dbReference type="PIRSF" id="PIRSF000509">
    <property type="entry name" value="Trp_DMAT"/>
    <property type="match status" value="1"/>
</dbReference>
<dbReference type="SFLD" id="SFLDS00036">
    <property type="entry name" value="Aromatic_Prenyltransferase"/>
    <property type="match status" value="1"/>
</dbReference>
<dbReference type="SFLD" id="SFLDG01162">
    <property type="entry name" value="I"/>
    <property type="match status" value="1"/>
</dbReference>
<comment type="function">
    <text evidence="4 5 6 7 9">Indole diterpene prenyltransferase; part of the gene cluster that mediates the biosynthesis of the prenylated pyrroloindoline diketopiperazine acetylaszonalenin (PubMed:19001367). The first step in the pathway is the formation of (R)-benzodiazepinedione by condensation of tryptophan and anthranilic acid catalyzed by the non-ribosomal peptide synthetase anaPS (PubMed:19001367). The prenyltransferase anaPT then converts (R)-benzodiazepinedione to aszonalenin in the presence of dimethylallyl diphosphate (DMAPP) via C3-prenylation (PubMed:19001367, PubMed:19421461, PubMed:20165805, PubMed:24014429, PubMed:26294262). The last step in the biosynthesis of acetylaszonalenin via acetylation of aszonalenin at position N1 catalyzed by anaAT (PubMed:19001367, PubMed:20165805).</text>
</comment>
<comment type="catalytic activity">
    <reaction evidence="5">
        <text>(R)-benzodiazepinedione + dimethylallyl diphosphate = (2R,3S,11R)-aszonalenin + diphosphate</text>
        <dbReference type="Rhea" id="RHEA:73187"/>
        <dbReference type="ChEBI" id="CHEBI:33019"/>
        <dbReference type="ChEBI" id="CHEBI:57623"/>
        <dbReference type="ChEBI" id="CHEBI:188914"/>
        <dbReference type="ChEBI" id="CHEBI:192681"/>
    </reaction>
    <physiologicalReaction direction="left-to-right" evidence="5">
        <dbReference type="Rhea" id="RHEA:73188"/>
    </physiologicalReaction>
</comment>
<comment type="catalytic activity">
    <reaction evidence="5">
        <text>(S)-benzodiazepinedione + dimethylallyl diphosphate = (2R,3S,11S)-aszonalenin + diphosphate</text>
        <dbReference type="Rhea" id="RHEA:73723"/>
        <dbReference type="ChEBI" id="CHEBI:33019"/>
        <dbReference type="ChEBI" id="CHEBI:57623"/>
        <dbReference type="ChEBI" id="CHEBI:192692"/>
        <dbReference type="ChEBI" id="CHEBI:192693"/>
    </reaction>
    <physiologicalReaction direction="left-to-right" evidence="5">
        <dbReference type="Rhea" id="RHEA:73724"/>
    </physiologicalReaction>
</comment>
<comment type="biophysicochemical properties">
    <kinetics>
        <KM evidence="4 9">232 uM for (R)-benzodiazepinedione</KM>
        <KM evidence="4">156 uM for dimethylallyl diphosphate (DMAPP)</KM>
        <KM evidence="7">160 uM for geranyl diphosphate (GPP)</KM>
        <KM evidence="9">260 uM for naringenin</KM>
        <KM evidence="9">480 uM for 7-hydroxyflavanone</KM>
        <KM evidence="9">290 uM for eriodictyol</KM>
        <KM evidence="9">180 uM for silibinin</KM>
        <KM evidence="9">810 uM for phloretin</KM>
        <KM evidence="9">110 uM for apigenin</KM>
        <KM evidence="9">510 uM for genistein</KM>
        <KM evidence="9">110 uM for biochanin A</KM>
    </kinetics>
</comment>
<comment type="pathway">
    <text evidence="4">Alkaloid biosynthesis.</text>
</comment>
<comment type="similarity">
    <text evidence="11">Belongs to the tryptophan dimethylallyltransferase family.</text>
</comment>
<feature type="chain" id="PRO_0000438417" description="Indole diterpene prenyltransferase anaPT">
    <location>
        <begin position="1"/>
        <end position="437"/>
    </location>
</feature>
<feature type="region of interest" description="Disordered" evidence="3">
    <location>
        <begin position="1"/>
        <end position="28"/>
    </location>
</feature>
<feature type="binding site" evidence="2">
    <location>
        <begin position="102"/>
        <end position="103"/>
    </location>
    <ligand>
        <name>L-tryptophan</name>
        <dbReference type="ChEBI" id="CHEBI:57912"/>
    </ligand>
</feature>
<feature type="binding site" evidence="2">
    <location>
        <position position="111"/>
    </location>
    <ligand>
        <name>L-tryptophan</name>
        <dbReference type="ChEBI" id="CHEBI:57912"/>
    </ligand>
</feature>
<feature type="binding site" evidence="1">
    <location>
        <position position="124"/>
    </location>
    <ligand>
        <name>dimethylallyl diphosphate</name>
        <dbReference type="ChEBI" id="CHEBI:57623"/>
    </ligand>
</feature>
<feature type="binding site" evidence="1">
    <location>
        <position position="208"/>
    </location>
    <ligand>
        <name>dimethylallyl diphosphate</name>
        <dbReference type="ChEBI" id="CHEBI:57623"/>
    </ligand>
</feature>
<feature type="binding site" evidence="1">
    <location>
        <position position="210"/>
    </location>
    <ligand>
        <name>dimethylallyl diphosphate</name>
        <dbReference type="ChEBI" id="CHEBI:57623"/>
    </ligand>
</feature>
<feature type="binding site" evidence="1">
    <location>
        <position position="282"/>
    </location>
    <ligand>
        <name>dimethylallyl diphosphate</name>
        <dbReference type="ChEBI" id="CHEBI:57623"/>
    </ligand>
</feature>
<feature type="binding site" evidence="1">
    <location>
        <position position="355"/>
    </location>
    <ligand>
        <name>dimethylallyl diphosphate</name>
        <dbReference type="ChEBI" id="CHEBI:57623"/>
    </ligand>
</feature>
<feature type="binding site" evidence="1">
    <location>
        <position position="357"/>
    </location>
    <ligand>
        <name>dimethylallyl diphosphate</name>
        <dbReference type="ChEBI" id="CHEBI:57623"/>
    </ligand>
</feature>
<feature type="binding site" evidence="1">
    <location>
        <position position="422"/>
    </location>
    <ligand>
        <name>dimethylallyl diphosphate</name>
        <dbReference type="ChEBI" id="CHEBI:57623"/>
    </ligand>
</feature>
<feature type="binding site" evidence="1">
    <location>
        <position position="426"/>
    </location>
    <ligand>
        <name>dimethylallyl diphosphate</name>
        <dbReference type="ChEBI" id="CHEBI:57623"/>
    </ligand>
</feature>
<feature type="helix" evidence="12">
    <location>
        <begin position="32"/>
        <end position="40"/>
    </location>
</feature>
<feature type="helix" evidence="12">
    <location>
        <begin position="45"/>
        <end position="64"/>
    </location>
</feature>
<feature type="helix" evidence="12">
    <location>
        <begin position="69"/>
        <end position="82"/>
    </location>
</feature>
<feature type="helix" evidence="12">
    <location>
        <begin position="84"/>
        <end position="86"/>
    </location>
</feature>
<feature type="turn" evidence="12">
    <location>
        <begin position="94"/>
        <end position="96"/>
    </location>
</feature>
<feature type="strand" evidence="12">
    <location>
        <begin position="102"/>
        <end position="106"/>
    </location>
</feature>
<feature type="strand" evidence="12">
    <location>
        <begin position="109"/>
        <end position="116"/>
    </location>
</feature>
<feature type="strand" evidence="12">
    <location>
        <begin position="121"/>
        <end position="127"/>
    </location>
</feature>
<feature type="strand" evidence="12">
    <location>
        <begin position="136"/>
        <end position="139"/>
    </location>
</feature>
<feature type="helix" evidence="12">
    <location>
        <begin position="145"/>
        <end position="156"/>
    </location>
</feature>
<feature type="helix" evidence="12">
    <location>
        <begin position="163"/>
        <end position="172"/>
    </location>
</feature>
<feature type="helix" evidence="12">
    <location>
        <begin position="176"/>
        <end position="183"/>
    </location>
</feature>
<feature type="helix" evidence="12">
    <location>
        <begin position="188"/>
        <end position="190"/>
    </location>
</feature>
<feature type="strand" evidence="12">
    <location>
        <begin position="194"/>
        <end position="201"/>
    </location>
</feature>
<feature type="strand" evidence="12">
    <location>
        <begin position="204"/>
        <end position="212"/>
    </location>
</feature>
<feature type="helix" evidence="12">
    <location>
        <begin position="214"/>
        <end position="220"/>
    </location>
</feature>
<feature type="helix" evidence="12">
    <location>
        <begin position="224"/>
        <end position="233"/>
    </location>
</feature>
<feature type="helix" evidence="12">
    <location>
        <begin position="241"/>
        <end position="256"/>
    </location>
</feature>
<feature type="strand" evidence="12">
    <location>
        <begin position="257"/>
        <end position="259"/>
    </location>
</feature>
<feature type="strand" evidence="12">
    <location>
        <begin position="262"/>
        <end position="272"/>
    </location>
</feature>
<feature type="turn" evidence="12">
    <location>
        <begin position="274"/>
        <end position="276"/>
    </location>
</feature>
<feature type="strand" evidence="12">
    <location>
        <begin position="279"/>
        <end position="286"/>
    </location>
</feature>
<feature type="helix" evidence="12">
    <location>
        <begin position="290"/>
        <end position="297"/>
    </location>
</feature>
<feature type="turn" evidence="12">
    <location>
        <begin position="298"/>
        <end position="302"/>
    </location>
</feature>
<feature type="helix" evidence="12">
    <location>
        <begin position="306"/>
        <end position="321"/>
    </location>
</feature>
<feature type="strand" evidence="12">
    <location>
        <begin position="339"/>
        <end position="345"/>
    </location>
</feature>
<feature type="strand" evidence="12">
    <location>
        <begin position="353"/>
        <end position="359"/>
    </location>
</feature>
<feature type="helix" evidence="12">
    <location>
        <begin position="365"/>
        <end position="379"/>
    </location>
</feature>
<feature type="helix" evidence="12">
    <location>
        <begin position="382"/>
        <end position="394"/>
    </location>
</feature>
<feature type="strand" evidence="12">
    <location>
        <begin position="397"/>
        <end position="399"/>
    </location>
</feature>
<feature type="turn" evidence="12">
    <location>
        <begin position="401"/>
        <end position="403"/>
    </location>
</feature>
<feature type="strand" evidence="12">
    <location>
        <begin position="405"/>
        <end position="416"/>
    </location>
</feature>
<feature type="turn" evidence="12">
    <location>
        <begin position="417"/>
        <end position="419"/>
    </location>
</feature>
<feature type="strand" evidence="12">
    <location>
        <begin position="420"/>
        <end position="427"/>
    </location>
</feature>
<feature type="strand" evidence="12">
    <location>
        <begin position="430"/>
        <end position="433"/>
    </location>
</feature>